<comment type="function">
    <text evidence="1">Plays a role in the regulation of phosphate uptake.</text>
</comment>
<comment type="subunit">
    <text evidence="1">Homodimer.</text>
</comment>
<comment type="subcellular location">
    <subcellularLocation>
        <location evidence="1">Cytoplasm</location>
    </subcellularLocation>
</comment>
<comment type="similarity">
    <text evidence="2">Belongs to the PhoU family.</text>
</comment>
<gene>
    <name type="primary">phoU</name>
    <name type="ordered locus">CCNA_00295</name>
</gene>
<sequence>MTEHTVKSYGEELAHLTAEVTRMGGIAESQVADCIAAIARRDGPLAQAVVAGDERLDTLQSEIERKAFRLIALRQPMAVDLRHAVAALKISMSLERCGDMAKNIGKRALILTEADPMSALTRSIERMGKLVQGRLKDVLDAYTTSDLQRAIGVWSRDEEVDEHYNAIFRELLTYMMGDPRTINACTHLLFVAKNLERIGDHATNIAEIIHFELTGEELTSQRPKLDVLSQ</sequence>
<organism>
    <name type="scientific">Caulobacter vibrioides (strain NA1000 / CB15N)</name>
    <name type="common">Caulobacter crescentus</name>
    <dbReference type="NCBI Taxonomy" id="565050"/>
    <lineage>
        <taxon>Bacteria</taxon>
        <taxon>Pseudomonadati</taxon>
        <taxon>Pseudomonadota</taxon>
        <taxon>Alphaproteobacteria</taxon>
        <taxon>Caulobacterales</taxon>
        <taxon>Caulobacteraceae</taxon>
        <taxon>Caulobacter</taxon>
    </lineage>
</organism>
<protein>
    <recommendedName>
        <fullName>Phosphate-specific transport system accessory protein PhoU homolog</fullName>
        <shortName>Pst system accessory protein PhoU homolog</shortName>
    </recommendedName>
</protein>
<accession>B8GYG5</accession>
<accession>Q9RFA7</accession>
<feature type="chain" id="PRO_0000378302" description="Phosphate-specific transport system accessory protein PhoU homolog">
    <location>
        <begin position="1"/>
        <end position="230"/>
    </location>
</feature>
<feature type="sequence conflict" description="In Ref. 1; AAF15532." evidence="2" ref="1">
    <original>K</original>
    <variation>N</variation>
    <location>
        <position position="102"/>
    </location>
</feature>
<feature type="sequence conflict" description="In Ref. 1; AAF15532." evidence="2" ref="1">
    <original>V</original>
    <variation>L</variation>
    <location>
        <position position="153"/>
    </location>
</feature>
<evidence type="ECO:0000250" key="1"/>
<evidence type="ECO:0000305" key="2"/>
<name>PHOU_CAUVN</name>
<dbReference type="EMBL" id="AF196490">
    <property type="protein sequence ID" value="AAF15532.1"/>
    <property type="molecule type" value="Genomic_DNA"/>
</dbReference>
<dbReference type="EMBL" id="CP001340">
    <property type="protein sequence ID" value="ACL93762.1"/>
    <property type="molecule type" value="Genomic_DNA"/>
</dbReference>
<dbReference type="RefSeq" id="WP_010918182.1">
    <property type="nucleotide sequence ID" value="NC_011916.1"/>
</dbReference>
<dbReference type="RefSeq" id="YP_002515670.1">
    <property type="nucleotide sequence ID" value="NC_011916.1"/>
</dbReference>
<dbReference type="SMR" id="B8GYG5"/>
<dbReference type="GeneID" id="7330748"/>
<dbReference type="KEGG" id="ccs:CCNA_00295"/>
<dbReference type="PATRIC" id="fig|565050.3.peg.292"/>
<dbReference type="HOGENOM" id="CLU_078518_2_1_5"/>
<dbReference type="OrthoDB" id="9814256at2"/>
<dbReference type="PhylomeDB" id="B8GYG5"/>
<dbReference type="Proteomes" id="UP000001364">
    <property type="component" value="Chromosome"/>
</dbReference>
<dbReference type="GO" id="GO:0005737">
    <property type="term" value="C:cytoplasm"/>
    <property type="evidence" value="ECO:0000250"/>
    <property type="project" value="UniProtKB"/>
</dbReference>
<dbReference type="GO" id="GO:0042803">
    <property type="term" value="F:protein homodimerization activity"/>
    <property type="evidence" value="ECO:0000250"/>
    <property type="project" value="UniProtKB"/>
</dbReference>
<dbReference type="GO" id="GO:0030643">
    <property type="term" value="P:intracellular phosphate ion homeostasis"/>
    <property type="evidence" value="ECO:0007669"/>
    <property type="project" value="InterPro"/>
</dbReference>
<dbReference type="GO" id="GO:0045936">
    <property type="term" value="P:negative regulation of phosphate metabolic process"/>
    <property type="evidence" value="ECO:0000250"/>
    <property type="project" value="UniProtKB"/>
</dbReference>
<dbReference type="GO" id="GO:2000186">
    <property type="term" value="P:negative regulation of phosphate transmembrane transport"/>
    <property type="evidence" value="ECO:0000250"/>
    <property type="project" value="UniProtKB"/>
</dbReference>
<dbReference type="GO" id="GO:0006817">
    <property type="term" value="P:phosphate ion transport"/>
    <property type="evidence" value="ECO:0007669"/>
    <property type="project" value="UniProtKB-KW"/>
</dbReference>
<dbReference type="FunFam" id="1.20.58.220:FF:000004">
    <property type="entry name" value="Phosphate-specific transport system accessory protein PhoU"/>
    <property type="match status" value="1"/>
</dbReference>
<dbReference type="Gene3D" id="1.20.58.220">
    <property type="entry name" value="Phosphate transport system protein phou homolog 2, domain 2"/>
    <property type="match status" value="1"/>
</dbReference>
<dbReference type="InterPro" id="IPR028366">
    <property type="entry name" value="P_transport_PhoU"/>
</dbReference>
<dbReference type="InterPro" id="IPR038078">
    <property type="entry name" value="PhoU-like_sf"/>
</dbReference>
<dbReference type="InterPro" id="IPR026022">
    <property type="entry name" value="PhoU_dom"/>
</dbReference>
<dbReference type="NCBIfam" id="TIGR02135">
    <property type="entry name" value="phoU_full"/>
    <property type="match status" value="1"/>
</dbReference>
<dbReference type="PANTHER" id="PTHR42930">
    <property type="entry name" value="PHOSPHATE-SPECIFIC TRANSPORT SYSTEM ACCESSORY PROTEIN PHOU"/>
    <property type="match status" value="1"/>
</dbReference>
<dbReference type="PANTHER" id="PTHR42930:SF3">
    <property type="entry name" value="PHOSPHATE-SPECIFIC TRANSPORT SYSTEM ACCESSORY PROTEIN PHOU"/>
    <property type="match status" value="1"/>
</dbReference>
<dbReference type="Pfam" id="PF01895">
    <property type="entry name" value="PhoU"/>
    <property type="match status" value="2"/>
</dbReference>
<dbReference type="PIRSF" id="PIRSF003107">
    <property type="entry name" value="PhoU"/>
    <property type="match status" value="1"/>
</dbReference>
<dbReference type="SUPFAM" id="SSF109755">
    <property type="entry name" value="PhoU-like"/>
    <property type="match status" value="1"/>
</dbReference>
<reference key="1">
    <citation type="journal article" date="2000" name="J. Bacteriol.">
        <title>Regulation of stalk elongation by phosphate in Caulobacter crescentus.</title>
        <authorList>
            <person name="Gonin M."/>
            <person name="Quardokus E.M."/>
            <person name="O'Donnol D."/>
            <person name="Maddock J.R."/>
            <person name="Brun Y.V."/>
        </authorList>
    </citation>
    <scope>NUCLEOTIDE SEQUENCE [GENOMIC DNA]</scope>
</reference>
<reference key="2">
    <citation type="journal article" date="2010" name="J. Bacteriol.">
        <title>The genetic basis of laboratory adaptation in Caulobacter crescentus.</title>
        <authorList>
            <person name="Marks M.E."/>
            <person name="Castro-Rojas C.M."/>
            <person name="Teiling C."/>
            <person name="Du L."/>
            <person name="Kapatral V."/>
            <person name="Walunas T.L."/>
            <person name="Crosson S."/>
        </authorList>
    </citation>
    <scope>NUCLEOTIDE SEQUENCE [LARGE SCALE GENOMIC DNA]</scope>
    <source>
        <strain>NA1000 / CB15N</strain>
    </source>
</reference>
<keyword id="KW-0963">Cytoplasm</keyword>
<keyword id="KW-0592">Phosphate transport</keyword>
<keyword id="KW-1185">Reference proteome</keyword>
<keyword id="KW-0813">Transport</keyword>
<proteinExistence type="inferred from homology"/>